<feature type="chain" id="PRO_0000434026" description="DNA double-strand break repair helicase HerA">
    <location>
        <begin position="1"/>
        <end position="495"/>
    </location>
</feature>
<feature type="binding site" evidence="2">
    <location>
        <position position="141"/>
    </location>
    <ligand>
        <name>ATP</name>
        <dbReference type="ChEBI" id="CHEBI:30616"/>
    </ligand>
</feature>
<feature type="binding site" evidence="2">
    <location>
        <begin position="150"/>
        <end position="155"/>
    </location>
    <ligand>
        <name>ATP</name>
        <dbReference type="ChEBI" id="CHEBI:30616"/>
    </ligand>
</feature>
<feature type="binding site" evidence="2">
    <location>
        <begin position="458"/>
        <end position="459"/>
    </location>
    <ligand>
        <name>ATP</name>
        <dbReference type="ChEBI" id="CHEBI:30616"/>
    </ligand>
</feature>
<feature type="mutagenesis site" description="Lack of ATPase and helicase activities." evidence="3">
    <original>K</original>
    <variation>A</variation>
    <location>
        <position position="153"/>
    </location>
</feature>
<feature type="mutagenesis site" description="Strong decrease in ATPase and helicase activities." evidence="3">
    <original>D</original>
    <variation>A</variation>
    <location>
        <position position="175"/>
    </location>
</feature>
<feature type="mutagenesis site" description="Lack of ATPase and helicase activities. Decreases ssDNA-binding ability. Does not bind to blunt-ended dsDNA and Holliday junction substrate." evidence="3">
    <original>E</original>
    <variation>A</variation>
    <location>
        <position position="355"/>
    </location>
</feature>
<feature type="mutagenesis site" description="Strong decrease in ATPase and helicase activities." evidence="3">
    <original>R</original>
    <variation>A</variation>
    <location>
        <position position="380"/>
    </location>
</feature>
<name>HERA_SULTO</name>
<evidence type="ECO:0000250" key="1">
    <source>
        <dbReference type="UniProtKB" id="Q8U1P0"/>
    </source>
</evidence>
<evidence type="ECO:0000250" key="2">
    <source>
        <dbReference type="UniProtKB" id="Q97WG8"/>
    </source>
</evidence>
<evidence type="ECO:0000269" key="3">
    <source>
    </source>
</evidence>
<evidence type="ECO:0000303" key="4">
    <source>
    </source>
</evidence>
<evidence type="ECO:0000305" key="5"/>
<evidence type="ECO:0000312" key="6">
    <source>
        <dbReference type="EMBL" id="BAB67210.1"/>
    </source>
</evidence>
<organism>
    <name type="scientific">Sulfurisphaera tokodaii (strain DSM 16993 / JCM 10545 / NBRC 100140 / 7)</name>
    <name type="common">Sulfolobus tokodaii</name>
    <dbReference type="NCBI Taxonomy" id="273063"/>
    <lineage>
        <taxon>Archaea</taxon>
        <taxon>Thermoproteota</taxon>
        <taxon>Thermoprotei</taxon>
        <taxon>Sulfolobales</taxon>
        <taxon>Sulfolobaceae</taxon>
        <taxon>Sulfurisphaera</taxon>
    </lineage>
</organism>
<gene>
    <name evidence="4" type="primary">herA</name>
    <name evidence="6" type="ordered locus">STK_21060</name>
</gene>
<dbReference type="EC" id="5.6.2.3" evidence="3"/>
<dbReference type="EC" id="5.6.2.4" evidence="3"/>
<dbReference type="EMBL" id="BA000023">
    <property type="protein sequence ID" value="BAB67210.1"/>
    <property type="molecule type" value="Genomic_DNA"/>
</dbReference>
<dbReference type="RefSeq" id="WP_010980185.1">
    <property type="nucleotide sequence ID" value="NC_003106.2"/>
</dbReference>
<dbReference type="SMR" id="Q96YR7"/>
<dbReference type="STRING" id="273063.STK_21060"/>
<dbReference type="GeneID" id="1460178"/>
<dbReference type="KEGG" id="sto:STK_21060"/>
<dbReference type="PATRIC" id="fig|273063.9.peg.2398"/>
<dbReference type="eggNOG" id="arCOG00280">
    <property type="taxonomic scope" value="Archaea"/>
</dbReference>
<dbReference type="OrthoDB" id="107033at2157"/>
<dbReference type="BRENDA" id="3.6.4.12">
    <property type="organism ID" value="15396"/>
</dbReference>
<dbReference type="Proteomes" id="UP000001015">
    <property type="component" value="Chromosome"/>
</dbReference>
<dbReference type="GO" id="GO:0005524">
    <property type="term" value="F:ATP binding"/>
    <property type="evidence" value="ECO:0007669"/>
    <property type="project" value="UniProtKB-KW"/>
</dbReference>
<dbReference type="GO" id="GO:0016887">
    <property type="term" value="F:ATP hydrolysis activity"/>
    <property type="evidence" value="ECO:0007669"/>
    <property type="project" value="RHEA"/>
</dbReference>
<dbReference type="GO" id="GO:0004386">
    <property type="term" value="F:helicase activity"/>
    <property type="evidence" value="ECO:0007669"/>
    <property type="project" value="UniProtKB-KW"/>
</dbReference>
<dbReference type="GO" id="GO:0006281">
    <property type="term" value="P:DNA repair"/>
    <property type="evidence" value="ECO:0007669"/>
    <property type="project" value="UniProtKB-KW"/>
</dbReference>
<dbReference type="Gene3D" id="3.40.50.300">
    <property type="entry name" value="P-loop containing nucleotide triphosphate hydrolases"/>
    <property type="match status" value="2"/>
</dbReference>
<dbReference type="InterPro" id="IPR053460">
    <property type="entry name" value="DSB_Repair_Helicase"/>
</dbReference>
<dbReference type="InterPro" id="IPR008571">
    <property type="entry name" value="HerA-like"/>
</dbReference>
<dbReference type="InterPro" id="IPR018538">
    <property type="entry name" value="HerA_barrel_dom"/>
</dbReference>
<dbReference type="InterPro" id="IPR033186">
    <property type="entry name" value="HerA_C"/>
</dbReference>
<dbReference type="InterPro" id="IPR002789">
    <property type="entry name" value="HerA_central"/>
</dbReference>
<dbReference type="InterPro" id="IPR027417">
    <property type="entry name" value="P-loop_NTPase"/>
</dbReference>
<dbReference type="NCBIfam" id="NF040937">
    <property type="entry name" value="HerA_Thermprot"/>
    <property type="match status" value="1"/>
</dbReference>
<dbReference type="PANTHER" id="PTHR42957">
    <property type="entry name" value="HELICASE MJ1565-RELATED"/>
    <property type="match status" value="1"/>
</dbReference>
<dbReference type="PANTHER" id="PTHR42957:SF1">
    <property type="entry name" value="HELICASE MJ1565-RELATED"/>
    <property type="match status" value="1"/>
</dbReference>
<dbReference type="Pfam" id="PF01935">
    <property type="entry name" value="DUF87"/>
    <property type="match status" value="1"/>
</dbReference>
<dbReference type="Pfam" id="PF09378">
    <property type="entry name" value="HAS-barrel"/>
    <property type="match status" value="1"/>
</dbReference>
<dbReference type="Pfam" id="PF05872">
    <property type="entry name" value="HerA_C"/>
    <property type="match status" value="1"/>
</dbReference>
<dbReference type="SUPFAM" id="SSF52540">
    <property type="entry name" value="P-loop containing nucleoside triphosphate hydrolases"/>
    <property type="match status" value="1"/>
</dbReference>
<keyword id="KW-0067">ATP-binding</keyword>
<keyword id="KW-0227">DNA damage</keyword>
<keyword id="KW-0234">DNA repair</keyword>
<keyword id="KW-0238">DNA-binding</keyword>
<keyword id="KW-0347">Helicase</keyword>
<keyword id="KW-0378">Hydrolase</keyword>
<keyword id="KW-0413">Isomerase</keyword>
<keyword id="KW-0547">Nucleotide-binding</keyword>
<keyword id="KW-1185">Reference proteome</keyword>
<sequence>MIIGYVVGSATTQEANVLLEKKVRSGYYVTLEYDDEKVLGLVTLITTGSPLVDDSLNDIELVQRIKQMGNKIPIYMKAKVKLLCKLDGKLSQPDLPPVAGTPVRLATNEELSTIFSEGTIRIGKLIGSDVEVRIRVNALTRHLAILAATGSGKSNTVAVLSSRLSEVFGSVLIFDYHGEYYESEIKNLNNIEPKINPLNLTPDEFATLLEIRENATIQYRILRRAFKSFLEETKEKLKNGNVNYNELNNNFRNLILKKVDEVSKNEKRKDSKDEVINKIEDFLDRYSEIIDFTAGDVVDKIKIGKVNVINLSSLDEDAIDAIVSHYLRKILTSRKENKMKRKIGLKFPVLVVIEEAHVLLSKDSNTLTKHWAGRIAREGRKFGVGLIIVSQRPKGIDENILSQMTNKIILKMVEPSDKKYVLETSDNLSEDIVEGLSALDTGEAVIVGNIVRMPAIVKIDKFEGKLAGSDPNLIEEWKKAKEEIEEHADVLNWGE</sequence>
<proteinExistence type="evidence at protein level"/>
<protein>
    <recommendedName>
        <fullName evidence="5">DNA double-strand break repair helicase HerA</fullName>
        <ecNumber evidence="3">5.6.2.3</ecNumber>
        <ecNumber evidence="3">5.6.2.4</ecNumber>
    </recommendedName>
    <alternativeName>
        <fullName evidence="5">Bidirectional DNA 3'-5' and 5'-3' helicase HerA</fullName>
    </alternativeName>
    <alternativeName>
        <fullName evidence="4">StoHerA</fullName>
    </alternativeName>
</protein>
<accession>Q96YR7</accession>
<reference key="1">
    <citation type="journal article" date="2001" name="DNA Res.">
        <title>Complete genome sequence of an aerobic thermoacidophilic Crenarchaeon, Sulfolobus tokodaii strain7.</title>
        <authorList>
            <person name="Kawarabayasi Y."/>
            <person name="Hino Y."/>
            <person name="Horikawa H."/>
            <person name="Jin-no K."/>
            <person name="Takahashi M."/>
            <person name="Sekine M."/>
            <person name="Baba S."/>
            <person name="Ankai A."/>
            <person name="Kosugi H."/>
            <person name="Hosoyama A."/>
            <person name="Fukui S."/>
            <person name="Nagai Y."/>
            <person name="Nishijima K."/>
            <person name="Otsuka R."/>
            <person name="Nakazawa H."/>
            <person name="Takamiya M."/>
            <person name="Kato Y."/>
            <person name="Yoshizawa T."/>
            <person name="Tanaka T."/>
            <person name="Kudoh Y."/>
            <person name="Yamazaki J."/>
            <person name="Kushida N."/>
            <person name="Oguchi A."/>
            <person name="Aoki K."/>
            <person name="Masuda S."/>
            <person name="Yanagii M."/>
            <person name="Nishimura M."/>
            <person name="Yamagishi A."/>
            <person name="Oshima T."/>
            <person name="Kikuchi H."/>
        </authorList>
    </citation>
    <scope>NUCLEOTIDE SEQUENCE [LARGE SCALE GENOMIC DNA]</scope>
    <source>
        <strain>DSM 16993 / JCM 10545 / NBRC 100140 / 7</strain>
    </source>
</reference>
<reference key="2">
    <citation type="journal article" date="2008" name="DNA Repair">
        <title>Archaeal DNA helicase HerA interacts with Mre11 homologue and unwinds blunt-ended double-stranded DNA and recombination intermediates.</title>
        <authorList>
            <person name="Zhang S."/>
            <person name="Wei T."/>
            <person name="Hou G."/>
            <person name="Zhang C."/>
            <person name="Liang P."/>
            <person name="Ni J."/>
            <person name="Sheng D."/>
            <person name="Shen Y."/>
        </authorList>
    </citation>
    <scope>FUNCTION AS A BIDIRECTIONAL HELICASE</scope>
    <scope>CATALYTIC ACTIVITY</scope>
    <scope>ACTIVITY REGULATION</scope>
    <scope>SUBUNIT</scope>
    <scope>INTERACTION WITH MRE11</scope>
    <scope>INDUCTION</scope>
    <scope>DNA-BINDING</scope>
    <scope>MUTAGENESIS OF LYS-153; ASP-175; GLU-355 AND ARG-380</scope>
</reference>
<comment type="function">
    <text evidence="1 3">Involved in DNA double-strand break (DSB) repair (PubMed:18243819). Probably acts with NurA to stimulate resection of the 5' strand and produce the long 3' single-strand that is required for RadA loading (By similarity). Has DNA-dependent ATPase activity and bidirectional DNA helicase activity (PubMed:18243819). Loads on either a 3' or a 5' DNA tail for subsequent DNA unwinding (PubMed:18243819). Can also unwind blunt-ended dsDNA, Holliday junction and splayed-arm DNA (PubMed:18243819).</text>
</comment>
<comment type="catalytic activity">
    <reaction evidence="3">
        <text>Couples ATP hydrolysis with the unwinding of duplex DNA at the replication fork by translocating in the 5'-3' direction. This creates two antiparallel DNA single strands (ssDNA). The leading ssDNA polymer is the template for DNA polymerase III holoenzyme which synthesizes a continuous strand.</text>
        <dbReference type="EC" id="5.6.2.3"/>
    </reaction>
</comment>
<comment type="catalytic activity">
    <reaction evidence="3">
        <text>ATP + H2O = ADP + phosphate + H(+)</text>
        <dbReference type="Rhea" id="RHEA:13065"/>
        <dbReference type="ChEBI" id="CHEBI:15377"/>
        <dbReference type="ChEBI" id="CHEBI:15378"/>
        <dbReference type="ChEBI" id="CHEBI:30616"/>
        <dbReference type="ChEBI" id="CHEBI:43474"/>
        <dbReference type="ChEBI" id="CHEBI:456216"/>
        <dbReference type="EC" id="5.6.2.3"/>
    </reaction>
</comment>
<comment type="catalytic activity">
    <reaction evidence="3">
        <text>Couples ATP hydrolysis with the unwinding of duplex DNA by translocating in the 3'-5' direction.</text>
        <dbReference type="EC" id="5.6.2.4"/>
    </reaction>
</comment>
<comment type="catalytic activity">
    <reaction evidence="3">
        <text>ATP + H2O = ADP + phosphate + H(+)</text>
        <dbReference type="Rhea" id="RHEA:13065"/>
        <dbReference type="ChEBI" id="CHEBI:15377"/>
        <dbReference type="ChEBI" id="CHEBI:15378"/>
        <dbReference type="ChEBI" id="CHEBI:30616"/>
        <dbReference type="ChEBI" id="CHEBI:43474"/>
        <dbReference type="ChEBI" id="CHEBI:456216"/>
        <dbReference type="EC" id="5.6.2.4"/>
    </reaction>
</comment>
<comment type="activity regulation">
    <text evidence="3">ATPase activity is slightly stimulated by either circular single- or double-stranded (ds)DNA with a weak preference for dsDNA (PubMed:18243819). Helicase activity is stimulated by Mre11 (PubMed:18243819).</text>
</comment>
<comment type="subunit">
    <text evidence="3">Forms a hexamer or a heptamer (PubMed:18243819). Interacts with Mre11 (PubMed:18243819).</text>
</comment>
<comment type="induction">
    <text evidence="3">Part of the nurA-rad50-mre11-herA operon, these genes are cotranscribed.</text>
</comment>
<comment type="similarity">
    <text evidence="5">Belongs to the HerA family.</text>
</comment>